<comment type="function">
    <text evidence="1">Mitochondrial membrane ATP synthase (F(1)F(0) ATP synthase or Complex V) produces ATP from ADP in the presence of a proton gradient across the membrane which is generated by electron transport complexes of the respiratory chain. F-type ATPases consist of two structural domains, F(1) - containing the extramembraneous catalytic core and F(0) - containing the membrane proton channel, linked together by a central stalk and a peripheral stalk. During catalysis, ATP synthesis in the catalytic domain of F(1) is coupled via a rotary mechanism of the central stalk subunits to proton translocation. Part of the complex F(0) domain. Minor subunit located with subunit a in the membrane (By similarity).</text>
</comment>
<comment type="subunit">
    <text evidence="1">F-type ATPases have 2 components, CF(1) - the catalytic core - and CF(0) - the membrane proton channel.</text>
</comment>
<comment type="subcellular location">
    <subcellularLocation>
        <location>Mitochondrion membrane</location>
        <topology>Single-pass membrane protein</topology>
    </subcellularLocation>
</comment>
<comment type="similarity">
    <text evidence="3">Belongs to the ATPase protein 8 family.</text>
</comment>
<protein>
    <recommendedName>
        <fullName>ATP synthase protein 8</fullName>
    </recommendedName>
    <alternativeName>
        <fullName>A6L</fullName>
    </alternativeName>
    <alternativeName>
        <fullName>F-ATPase subunit 8</fullName>
    </alternativeName>
</protein>
<keyword id="KW-0066">ATP synthesis</keyword>
<keyword id="KW-0138">CF(0)</keyword>
<keyword id="KW-0375">Hydrogen ion transport</keyword>
<keyword id="KW-0406">Ion transport</keyword>
<keyword id="KW-0472">Membrane</keyword>
<keyword id="KW-0496">Mitochondrion</keyword>
<keyword id="KW-0812">Transmembrane</keyword>
<keyword id="KW-1133">Transmembrane helix</keyword>
<keyword id="KW-0813">Transport</keyword>
<reference key="1">
    <citation type="journal article" date="1992" name="Mol. Biol. Evol.">
        <title>The cytochrome b and ATPase genes of honeybee mitochondrial DNA.</title>
        <authorList>
            <person name="Crozier R.H."/>
            <person name="Crozier Y.C."/>
        </authorList>
    </citation>
    <scope>NUCLEOTIDE SEQUENCE [GENOMIC DNA]</scope>
    <source>
        <tissue>Thorax</tissue>
    </source>
</reference>
<reference key="2">
    <citation type="journal article" date="1993" name="Genetics">
        <title>The mitochondrial genome of the honeybee Apis mellifera: complete sequence and genome organization.</title>
        <authorList>
            <person name="Crozier R.H."/>
            <person name="Crozier Y.C."/>
        </authorList>
    </citation>
    <scope>NUCLEOTIDE SEQUENCE [GENOMIC DNA]</scope>
    <source>
        <tissue>Thorax</tissue>
    </source>
</reference>
<organism>
    <name type="scientific">Apis mellifera ligustica</name>
    <name type="common">Common honeybee</name>
    <name type="synonym">Italian honeybee</name>
    <dbReference type="NCBI Taxonomy" id="7469"/>
    <lineage>
        <taxon>Eukaryota</taxon>
        <taxon>Metazoa</taxon>
        <taxon>Ecdysozoa</taxon>
        <taxon>Arthropoda</taxon>
        <taxon>Hexapoda</taxon>
        <taxon>Insecta</taxon>
        <taxon>Pterygota</taxon>
        <taxon>Neoptera</taxon>
        <taxon>Endopterygota</taxon>
        <taxon>Hymenoptera</taxon>
        <taxon>Apocrita</taxon>
        <taxon>Aculeata</taxon>
        <taxon>Apoidea</taxon>
        <taxon>Anthophila</taxon>
        <taxon>Apidae</taxon>
        <taxon>Apis</taxon>
    </lineage>
</organism>
<evidence type="ECO:0000250" key="1"/>
<evidence type="ECO:0000255" key="2"/>
<evidence type="ECO:0000305" key="3"/>
<dbReference type="EMBL" id="L06178">
    <property type="protein sequence ID" value="AAB96801.1"/>
    <property type="molecule type" value="Genomic_DNA"/>
</dbReference>
<dbReference type="EMBL" id="M87065">
    <property type="protein sequence ID" value="AAA31633.2"/>
    <property type="molecule type" value="Genomic_DNA"/>
</dbReference>
<dbReference type="PIR" id="S52963">
    <property type="entry name" value="S52963"/>
</dbReference>
<dbReference type="RefSeq" id="NP_008085.1">
    <property type="nucleotide sequence ID" value="NC_001566.1"/>
</dbReference>
<dbReference type="SMR" id="Q00276"/>
<dbReference type="GeneID" id="807699"/>
<dbReference type="CTD" id="4509"/>
<dbReference type="GO" id="GO:0031966">
    <property type="term" value="C:mitochondrial membrane"/>
    <property type="evidence" value="ECO:0007669"/>
    <property type="project" value="UniProtKB-SubCell"/>
</dbReference>
<dbReference type="GO" id="GO:0045259">
    <property type="term" value="C:proton-transporting ATP synthase complex"/>
    <property type="evidence" value="ECO:0007669"/>
    <property type="project" value="UniProtKB-KW"/>
</dbReference>
<dbReference type="GO" id="GO:0006754">
    <property type="term" value="P:ATP biosynthetic process"/>
    <property type="evidence" value="ECO:0007669"/>
    <property type="project" value="UniProtKB-KW"/>
</dbReference>
<dbReference type="GO" id="GO:1902600">
    <property type="term" value="P:proton transmembrane transport"/>
    <property type="evidence" value="ECO:0007669"/>
    <property type="project" value="UniProtKB-KW"/>
</dbReference>
<feature type="chain" id="PRO_0000195486" description="ATP synthase protein 8">
    <location>
        <begin position="1"/>
        <end position="52"/>
    </location>
</feature>
<feature type="transmembrane region" description="Helical" evidence="2">
    <location>
        <begin position="7"/>
        <end position="27"/>
    </location>
</feature>
<name>ATP8_APILI</name>
<gene>
    <name type="primary">mt:ATPase8</name>
    <name type="synonym">ATP8</name>
    <name type="synonym">ATPASE8</name>
    <name type="synonym">MT-ATP8</name>
    <name type="synonym">MTATP8</name>
</gene>
<sequence length="52" mass="6694">MPQMMPMKWFLIYFIYLLIFYLFIMLINSMLIKTKINKETLKIKLKKWNWFW</sequence>
<geneLocation type="mitochondrion"/>
<accession>Q00276</accession>
<proteinExistence type="inferred from homology"/>